<feature type="chain" id="PRO_0000182878" description="Deoxyuridine 5'-triphosphate nucleotidohydrolase">
    <location>
        <begin position="1"/>
        <end position="145"/>
    </location>
</feature>
<feature type="binding site" evidence="1">
    <location>
        <begin position="64"/>
        <end position="66"/>
    </location>
    <ligand>
        <name>substrate</name>
    </ligand>
</feature>
<feature type="binding site" evidence="1">
    <location>
        <position position="77"/>
    </location>
    <ligand>
        <name>substrate</name>
    </ligand>
</feature>
<feature type="binding site" evidence="1">
    <location>
        <begin position="81"/>
        <end position="83"/>
    </location>
    <ligand>
        <name>substrate</name>
    </ligand>
</feature>
<feature type="binding site" evidence="1">
    <location>
        <position position="91"/>
    </location>
    <ligand>
        <name>substrate</name>
    </ligand>
</feature>
<gene>
    <name evidence="1" type="primary">dut</name>
    <name type="ordered locus">LA_1119</name>
</gene>
<keyword id="KW-0378">Hydrolase</keyword>
<keyword id="KW-0460">Magnesium</keyword>
<keyword id="KW-0479">Metal-binding</keyword>
<keyword id="KW-0546">Nucleotide metabolism</keyword>
<keyword id="KW-1185">Reference proteome</keyword>
<comment type="function">
    <text evidence="1">This enzyme is involved in nucleotide metabolism: it produces dUMP, the immediate precursor of thymidine nucleotides and it decreases the intracellular concentration of dUTP so that uracil cannot be incorporated into DNA.</text>
</comment>
<comment type="catalytic activity">
    <reaction evidence="1">
        <text>dUTP + H2O = dUMP + diphosphate + H(+)</text>
        <dbReference type="Rhea" id="RHEA:10248"/>
        <dbReference type="ChEBI" id="CHEBI:15377"/>
        <dbReference type="ChEBI" id="CHEBI:15378"/>
        <dbReference type="ChEBI" id="CHEBI:33019"/>
        <dbReference type="ChEBI" id="CHEBI:61555"/>
        <dbReference type="ChEBI" id="CHEBI:246422"/>
        <dbReference type="EC" id="3.6.1.23"/>
    </reaction>
</comment>
<comment type="cofactor">
    <cofactor evidence="1">
        <name>Mg(2+)</name>
        <dbReference type="ChEBI" id="CHEBI:18420"/>
    </cofactor>
</comment>
<comment type="pathway">
    <text evidence="1">Pyrimidine metabolism; dUMP biosynthesis; dUMP from dCTP (dUTP route): step 2/2.</text>
</comment>
<comment type="similarity">
    <text evidence="1">Belongs to the dUTPase family.</text>
</comment>
<sequence>MKIFVQKLRPNAELPLLQTKQAAGYDIHACLDSKLVLEPGNVGLVPTGLSFAIPQEFHFEIRPRSGFSTKNRILIPNSPGTIDSDYRGELMIPLLNLGDSSFIIEHGMRIAQLLIRKTWYADWELVSEFADRTERGANGFGSTGH</sequence>
<dbReference type="EC" id="3.6.1.23" evidence="1"/>
<dbReference type="EMBL" id="AE010300">
    <property type="protein sequence ID" value="AAN48318.1"/>
    <property type="molecule type" value="Genomic_DNA"/>
</dbReference>
<dbReference type="RefSeq" id="NP_711300.1">
    <property type="nucleotide sequence ID" value="NC_004342.2"/>
</dbReference>
<dbReference type="RefSeq" id="WP_000689546.1">
    <property type="nucleotide sequence ID" value="NC_004342.2"/>
</dbReference>
<dbReference type="SMR" id="Q8F729"/>
<dbReference type="FunCoup" id="Q8F729">
    <property type="interactions" value="374"/>
</dbReference>
<dbReference type="STRING" id="189518.LA_1119"/>
<dbReference type="PaxDb" id="189518-LA_1119"/>
<dbReference type="EnsemblBacteria" id="AAN48318">
    <property type="protein sequence ID" value="AAN48318"/>
    <property type="gene ID" value="LA_1119"/>
</dbReference>
<dbReference type="GeneID" id="61142438"/>
<dbReference type="KEGG" id="lil:LA_1119"/>
<dbReference type="PATRIC" id="fig|189518.3.peg.1111"/>
<dbReference type="HOGENOM" id="CLU_068508_1_2_12"/>
<dbReference type="InParanoid" id="Q8F729"/>
<dbReference type="OrthoDB" id="9809956at2"/>
<dbReference type="UniPathway" id="UPA00610">
    <property type="reaction ID" value="UER00666"/>
</dbReference>
<dbReference type="Proteomes" id="UP000001408">
    <property type="component" value="Chromosome I"/>
</dbReference>
<dbReference type="GO" id="GO:0004170">
    <property type="term" value="F:dUTP diphosphatase activity"/>
    <property type="evidence" value="ECO:0000318"/>
    <property type="project" value="GO_Central"/>
</dbReference>
<dbReference type="GO" id="GO:0000287">
    <property type="term" value="F:magnesium ion binding"/>
    <property type="evidence" value="ECO:0000318"/>
    <property type="project" value="GO_Central"/>
</dbReference>
<dbReference type="GO" id="GO:0006226">
    <property type="term" value="P:dUMP biosynthetic process"/>
    <property type="evidence" value="ECO:0000318"/>
    <property type="project" value="GO_Central"/>
</dbReference>
<dbReference type="GO" id="GO:0046081">
    <property type="term" value="P:dUTP catabolic process"/>
    <property type="evidence" value="ECO:0000318"/>
    <property type="project" value="GO_Central"/>
</dbReference>
<dbReference type="CDD" id="cd07557">
    <property type="entry name" value="trimeric_dUTPase"/>
    <property type="match status" value="1"/>
</dbReference>
<dbReference type="Gene3D" id="2.70.40.10">
    <property type="match status" value="1"/>
</dbReference>
<dbReference type="HAMAP" id="MF_00116">
    <property type="entry name" value="dUTPase_bact"/>
    <property type="match status" value="1"/>
</dbReference>
<dbReference type="InterPro" id="IPR008181">
    <property type="entry name" value="dUTPase"/>
</dbReference>
<dbReference type="InterPro" id="IPR029054">
    <property type="entry name" value="dUTPase-like"/>
</dbReference>
<dbReference type="InterPro" id="IPR036157">
    <property type="entry name" value="dUTPase-like_sf"/>
</dbReference>
<dbReference type="InterPro" id="IPR033704">
    <property type="entry name" value="dUTPase_trimeric"/>
</dbReference>
<dbReference type="NCBIfam" id="TIGR00576">
    <property type="entry name" value="dut"/>
    <property type="match status" value="1"/>
</dbReference>
<dbReference type="NCBIfam" id="NF001862">
    <property type="entry name" value="PRK00601.1"/>
    <property type="match status" value="1"/>
</dbReference>
<dbReference type="PANTHER" id="PTHR11241">
    <property type="entry name" value="DEOXYURIDINE 5'-TRIPHOSPHATE NUCLEOTIDOHYDROLASE"/>
    <property type="match status" value="1"/>
</dbReference>
<dbReference type="PANTHER" id="PTHR11241:SF0">
    <property type="entry name" value="DEOXYURIDINE 5'-TRIPHOSPHATE NUCLEOTIDOHYDROLASE"/>
    <property type="match status" value="1"/>
</dbReference>
<dbReference type="Pfam" id="PF00692">
    <property type="entry name" value="dUTPase"/>
    <property type="match status" value="1"/>
</dbReference>
<dbReference type="SUPFAM" id="SSF51283">
    <property type="entry name" value="dUTPase-like"/>
    <property type="match status" value="1"/>
</dbReference>
<accession>Q8F729</accession>
<reference key="1">
    <citation type="journal article" date="2003" name="Nature">
        <title>Unique physiological and pathogenic features of Leptospira interrogans revealed by whole-genome sequencing.</title>
        <authorList>
            <person name="Ren S.-X."/>
            <person name="Fu G."/>
            <person name="Jiang X.-G."/>
            <person name="Zeng R."/>
            <person name="Miao Y.-G."/>
            <person name="Xu H."/>
            <person name="Zhang Y.-X."/>
            <person name="Xiong H."/>
            <person name="Lu G."/>
            <person name="Lu L.-F."/>
            <person name="Jiang H.-Q."/>
            <person name="Jia J."/>
            <person name="Tu Y.-F."/>
            <person name="Jiang J.-X."/>
            <person name="Gu W.-Y."/>
            <person name="Zhang Y.-Q."/>
            <person name="Cai Z."/>
            <person name="Sheng H.-H."/>
            <person name="Yin H.-F."/>
            <person name="Zhang Y."/>
            <person name="Zhu G.-F."/>
            <person name="Wan M."/>
            <person name="Huang H.-L."/>
            <person name="Qian Z."/>
            <person name="Wang S.-Y."/>
            <person name="Ma W."/>
            <person name="Yao Z.-J."/>
            <person name="Shen Y."/>
            <person name="Qiang B.-Q."/>
            <person name="Xia Q.-C."/>
            <person name="Guo X.-K."/>
            <person name="Danchin A."/>
            <person name="Saint Girons I."/>
            <person name="Somerville R.L."/>
            <person name="Wen Y.-M."/>
            <person name="Shi M.-H."/>
            <person name="Chen Z."/>
            <person name="Xu J.-G."/>
            <person name="Zhao G.-P."/>
        </authorList>
    </citation>
    <scope>NUCLEOTIDE SEQUENCE [LARGE SCALE GENOMIC DNA]</scope>
    <source>
        <strain>56601</strain>
    </source>
</reference>
<name>DUT_LEPIN</name>
<evidence type="ECO:0000255" key="1">
    <source>
        <dbReference type="HAMAP-Rule" id="MF_00116"/>
    </source>
</evidence>
<proteinExistence type="inferred from homology"/>
<protein>
    <recommendedName>
        <fullName evidence="1">Deoxyuridine 5'-triphosphate nucleotidohydrolase</fullName>
        <shortName evidence="1">dUTPase</shortName>
        <ecNumber evidence="1">3.6.1.23</ecNumber>
    </recommendedName>
    <alternativeName>
        <fullName evidence="1">dUTP pyrophosphatase</fullName>
    </alternativeName>
</protein>
<organism>
    <name type="scientific">Leptospira interrogans serogroup Icterohaemorrhagiae serovar Lai (strain 56601)</name>
    <dbReference type="NCBI Taxonomy" id="189518"/>
    <lineage>
        <taxon>Bacteria</taxon>
        <taxon>Pseudomonadati</taxon>
        <taxon>Spirochaetota</taxon>
        <taxon>Spirochaetia</taxon>
        <taxon>Leptospirales</taxon>
        <taxon>Leptospiraceae</taxon>
        <taxon>Leptospira</taxon>
    </lineage>
</organism>